<feature type="chain" id="PRO_0000276851" description="Protein CUSTOS">
    <location>
        <begin position="1"/>
        <end position="256"/>
    </location>
</feature>
<feature type="region of interest" description="Disordered" evidence="3">
    <location>
        <begin position="1"/>
        <end position="83"/>
    </location>
</feature>
<feature type="region of interest" description="Disordered" evidence="3">
    <location>
        <begin position="127"/>
        <end position="163"/>
    </location>
</feature>
<feature type="region of interest" description="Disordered" evidence="3">
    <location>
        <begin position="227"/>
        <end position="256"/>
    </location>
</feature>
<feature type="short sequence motif" description="Nucleolar localization signal (NLS)" evidence="1">
    <location>
        <begin position="228"/>
        <end position="235"/>
    </location>
</feature>
<feature type="compositionally biased region" description="Low complexity" evidence="3">
    <location>
        <begin position="1"/>
        <end position="19"/>
    </location>
</feature>
<feature type="compositionally biased region" description="Basic and acidic residues" evidence="3">
    <location>
        <begin position="63"/>
        <end position="83"/>
    </location>
</feature>
<feature type="compositionally biased region" description="Basic residues" evidence="3">
    <location>
        <begin position="228"/>
        <end position="237"/>
    </location>
</feature>
<feature type="compositionally biased region" description="Low complexity" evidence="3">
    <location>
        <begin position="246"/>
        <end position="256"/>
    </location>
</feature>
<feature type="modified residue" description="Phosphoserine" evidence="2">
    <location>
        <position position="62"/>
    </location>
</feature>
<feature type="modified residue" description="Phosphothreonine" evidence="2">
    <location>
        <position position="80"/>
    </location>
</feature>
<feature type="modified residue" description="Phosphoserine" evidence="2">
    <location>
        <position position="139"/>
    </location>
</feature>
<proteinExistence type="evidence at transcript level"/>
<organism>
    <name type="scientific">Mus musculus</name>
    <name type="common">Mouse</name>
    <dbReference type="NCBI Taxonomy" id="10090"/>
    <lineage>
        <taxon>Eukaryota</taxon>
        <taxon>Metazoa</taxon>
        <taxon>Chordata</taxon>
        <taxon>Craniata</taxon>
        <taxon>Vertebrata</taxon>
        <taxon>Euteleostomi</taxon>
        <taxon>Mammalia</taxon>
        <taxon>Eutheria</taxon>
        <taxon>Euarchontoglires</taxon>
        <taxon>Glires</taxon>
        <taxon>Rodentia</taxon>
        <taxon>Myomorpha</taxon>
        <taxon>Muroidea</taxon>
        <taxon>Muridae</taxon>
        <taxon>Murinae</taxon>
        <taxon>Mus</taxon>
        <taxon>Mus</taxon>
    </lineage>
</organism>
<sequence length="256" mass="27631">MVAPSGAMSDSENSSSSSSDAEELARCREAATPAWGLEQRPGAAERPEAGAADKQAPTPQPSRRHEVNQHEEDGNDLRTTPEFRAHVAKKLGALLDSSIAIAEVWKKSQKAKMQQVAKEEDGFRLFFTSIPGGHKKEASPRPCRKRQPPSSSEDSDEELQRCREAAVSASDILQESAIHCPAKAEEKKKLKKKAKKKVDNADLAAAPGLEQVKEAGVVNGDPVSLGIQKKRKKKAKKSREAPLCPPAECAAAKPEN</sequence>
<name>CSTOS_MOUSE</name>
<dbReference type="EMBL" id="AK008740">
    <property type="protein sequence ID" value="BAB25869.1"/>
    <property type="molecule type" value="mRNA"/>
</dbReference>
<dbReference type="EMBL" id="AK135000">
    <property type="protein sequence ID" value="BAE22379.1"/>
    <property type="molecule type" value="mRNA"/>
</dbReference>
<dbReference type="EMBL" id="AK159360">
    <property type="protein sequence ID" value="BAE35018.1"/>
    <property type="molecule type" value="mRNA"/>
</dbReference>
<dbReference type="EMBL" id="BC031162">
    <property type="protein sequence ID" value="AAH31162.1"/>
    <property type="molecule type" value="mRNA"/>
</dbReference>
<dbReference type="CCDS" id="CCDS19576.1"/>
<dbReference type="RefSeq" id="NP_082487.1">
    <property type="nucleotide sequence ID" value="NM_028211.1"/>
</dbReference>
<dbReference type="FunCoup" id="Q3UY34">
    <property type="interactions" value="100"/>
</dbReference>
<dbReference type="STRING" id="10090.ENSMUSP00000031538"/>
<dbReference type="GlyGen" id="Q3UY34">
    <property type="glycosylation" value="2 sites, 1 N-linked glycan (1 site), 1 O-linked glycan (1 site)"/>
</dbReference>
<dbReference type="iPTMnet" id="Q3UY34"/>
<dbReference type="PhosphoSitePlus" id="Q3UY34"/>
<dbReference type="PaxDb" id="10090-ENSMUSP00000031538"/>
<dbReference type="PeptideAtlas" id="Q3UY34"/>
<dbReference type="Pumba" id="Q3UY34"/>
<dbReference type="DNASU" id="72357"/>
<dbReference type="GeneID" id="72357"/>
<dbReference type="KEGG" id="mmu:72357"/>
<dbReference type="UCSC" id="uc008zcy.1">
    <property type="organism name" value="mouse"/>
</dbReference>
<dbReference type="AGR" id="MGI:1919607"/>
<dbReference type="MGI" id="MGI:1919607">
    <property type="gene designation" value="2210016L21Rik"/>
</dbReference>
<dbReference type="eggNOG" id="ENOG502S3AI">
    <property type="taxonomic scope" value="Eukaryota"/>
</dbReference>
<dbReference type="InParanoid" id="Q3UY34"/>
<dbReference type="OrthoDB" id="10053459at2759"/>
<dbReference type="PhylomeDB" id="Q3UY34"/>
<dbReference type="TreeFam" id="TF336221"/>
<dbReference type="BioGRID-ORCS" id="72357">
    <property type="hits" value="2 hits in 76 CRISPR screens"/>
</dbReference>
<dbReference type="ChiTaRS" id="2210016L21Rik">
    <property type="organism name" value="mouse"/>
</dbReference>
<dbReference type="PRO" id="PR:Q3UY34"/>
<dbReference type="Proteomes" id="UP000000589">
    <property type="component" value="Unplaced"/>
</dbReference>
<dbReference type="RNAct" id="Q3UY34">
    <property type="molecule type" value="protein"/>
</dbReference>
<dbReference type="GO" id="GO:0005635">
    <property type="term" value="C:nuclear envelope"/>
    <property type="evidence" value="ECO:0007669"/>
    <property type="project" value="UniProtKB-SubCell"/>
</dbReference>
<dbReference type="GO" id="GO:0016055">
    <property type="term" value="P:Wnt signaling pathway"/>
    <property type="evidence" value="ECO:0007669"/>
    <property type="project" value="UniProtKB-KW"/>
</dbReference>
<dbReference type="InterPro" id="IPR026694">
    <property type="entry name" value="CUSTOS"/>
</dbReference>
<dbReference type="PANTHER" id="PTHR14482">
    <property type="entry name" value="CHROMOSOME 12 ORF 43 HOMOLOG"/>
    <property type="match status" value="1"/>
</dbReference>
<dbReference type="PANTHER" id="PTHR14482:SF0">
    <property type="entry name" value="PROTEIN CUSTOS"/>
    <property type="match status" value="1"/>
</dbReference>
<dbReference type="Pfam" id="PF23999">
    <property type="entry name" value="CUSTOS"/>
    <property type="match status" value="1"/>
</dbReference>
<protein>
    <recommendedName>
        <fullName evidence="1">Protein CUSTOS</fullName>
    </recommendedName>
</protein>
<reference key="1">
    <citation type="journal article" date="2005" name="Science">
        <title>The transcriptional landscape of the mammalian genome.</title>
        <authorList>
            <person name="Carninci P."/>
            <person name="Kasukawa T."/>
            <person name="Katayama S."/>
            <person name="Gough J."/>
            <person name="Frith M.C."/>
            <person name="Maeda N."/>
            <person name="Oyama R."/>
            <person name="Ravasi T."/>
            <person name="Lenhard B."/>
            <person name="Wells C."/>
            <person name="Kodzius R."/>
            <person name="Shimokawa K."/>
            <person name="Bajic V.B."/>
            <person name="Brenner S.E."/>
            <person name="Batalov S."/>
            <person name="Forrest A.R."/>
            <person name="Zavolan M."/>
            <person name="Davis M.J."/>
            <person name="Wilming L.G."/>
            <person name="Aidinis V."/>
            <person name="Allen J.E."/>
            <person name="Ambesi-Impiombato A."/>
            <person name="Apweiler R."/>
            <person name="Aturaliya R.N."/>
            <person name="Bailey T.L."/>
            <person name="Bansal M."/>
            <person name="Baxter L."/>
            <person name="Beisel K.W."/>
            <person name="Bersano T."/>
            <person name="Bono H."/>
            <person name="Chalk A.M."/>
            <person name="Chiu K.P."/>
            <person name="Choudhary V."/>
            <person name="Christoffels A."/>
            <person name="Clutterbuck D.R."/>
            <person name="Crowe M.L."/>
            <person name="Dalla E."/>
            <person name="Dalrymple B.P."/>
            <person name="de Bono B."/>
            <person name="Della Gatta G."/>
            <person name="di Bernardo D."/>
            <person name="Down T."/>
            <person name="Engstrom P."/>
            <person name="Fagiolini M."/>
            <person name="Faulkner G."/>
            <person name="Fletcher C.F."/>
            <person name="Fukushima T."/>
            <person name="Furuno M."/>
            <person name="Futaki S."/>
            <person name="Gariboldi M."/>
            <person name="Georgii-Hemming P."/>
            <person name="Gingeras T.R."/>
            <person name="Gojobori T."/>
            <person name="Green R.E."/>
            <person name="Gustincich S."/>
            <person name="Harbers M."/>
            <person name="Hayashi Y."/>
            <person name="Hensch T.K."/>
            <person name="Hirokawa N."/>
            <person name="Hill D."/>
            <person name="Huminiecki L."/>
            <person name="Iacono M."/>
            <person name="Ikeo K."/>
            <person name="Iwama A."/>
            <person name="Ishikawa T."/>
            <person name="Jakt M."/>
            <person name="Kanapin A."/>
            <person name="Katoh M."/>
            <person name="Kawasawa Y."/>
            <person name="Kelso J."/>
            <person name="Kitamura H."/>
            <person name="Kitano H."/>
            <person name="Kollias G."/>
            <person name="Krishnan S.P."/>
            <person name="Kruger A."/>
            <person name="Kummerfeld S.K."/>
            <person name="Kurochkin I.V."/>
            <person name="Lareau L.F."/>
            <person name="Lazarevic D."/>
            <person name="Lipovich L."/>
            <person name="Liu J."/>
            <person name="Liuni S."/>
            <person name="McWilliam S."/>
            <person name="Madan Babu M."/>
            <person name="Madera M."/>
            <person name="Marchionni L."/>
            <person name="Matsuda H."/>
            <person name="Matsuzawa S."/>
            <person name="Miki H."/>
            <person name="Mignone F."/>
            <person name="Miyake S."/>
            <person name="Morris K."/>
            <person name="Mottagui-Tabar S."/>
            <person name="Mulder N."/>
            <person name="Nakano N."/>
            <person name="Nakauchi H."/>
            <person name="Ng P."/>
            <person name="Nilsson R."/>
            <person name="Nishiguchi S."/>
            <person name="Nishikawa S."/>
            <person name="Nori F."/>
            <person name="Ohara O."/>
            <person name="Okazaki Y."/>
            <person name="Orlando V."/>
            <person name="Pang K.C."/>
            <person name="Pavan W.J."/>
            <person name="Pavesi G."/>
            <person name="Pesole G."/>
            <person name="Petrovsky N."/>
            <person name="Piazza S."/>
            <person name="Reed J."/>
            <person name="Reid J.F."/>
            <person name="Ring B.Z."/>
            <person name="Ringwald M."/>
            <person name="Rost B."/>
            <person name="Ruan Y."/>
            <person name="Salzberg S.L."/>
            <person name="Sandelin A."/>
            <person name="Schneider C."/>
            <person name="Schoenbach C."/>
            <person name="Sekiguchi K."/>
            <person name="Semple C.A."/>
            <person name="Seno S."/>
            <person name="Sessa L."/>
            <person name="Sheng Y."/>
            <person name="Shibata Y."/>
            <person name="Shimada H."/>
            <person name="Shimada K."/>
            <person name="Silva D."/>
            <person name="Sinclair B."/>
            <person name="Sperling S."/>
            <person name="Stupka E."/>
            <person name="Sugiura K."/>
            <person name="Sultana R."/>
            <person name="Takenaka Y."/>
            <person name="Taki K."/>
            <person name="Tammoja K."/>
            <person name="Tan S.L."/>
            <person name="Tang S."/>
            <person name="Taylor M.S."/>
            <person name="Tegner J."/>
            <person name="Teichmann S.A."/>
            <person name="Ueda H.R."/>
            <person name="van Nimwegen E."/>
            <person name="Verardo R."/>
            <person name="Wei C.L."/>
            <person name="Yagi K."/>
            <person name="Yamanishi H."/>
            <person name="Zabarovsky E."/>
            <person name="Zhu S."/>
            <person name="Zimmer A."/>
            <person name="Hide W."/>
            <person name="Bult C."/>
            <person name="Grimmond S.M."/>
            <person name="Teasdale R.D."/>
            <person name="Liu E.T."/>
            <person name="Brusic V."/>
            <person name="Quackenbush J."/>
            <person name="Wahlestedt C."/>
            <person name="Mattick J.S."/>
            <person name="Hume D.A."/>
            <person name="Kai C."/>
            <person name="Sasaki D."/>
            <person name="Tomaru Y."/>
            <person name="Fukuda S."/>
            <person name="Kanamori-Katayama M."/>
            <person name="Suzuki M."/>
            <person name="Aoki J."/>
            <person name="Arakawa T."/>
            <person name="Iida J."/>
            <person name="Imamura K."/>
            <person name="Itoh M."/>
            <person name="Kato T."/>
            <person name="Kawaji H."/>
            <person name="Kawagashira N."/>
            <person name="Kawashima T."/>
            <person name="Kojima M."/>
            <person name="Kondo S."/>
            <person name="Konno H."/>
            <person name="Nakano K."/>
            <person name="Ninomiya N."/>
            <person name="Nishio T."/>
            <person name="Okada M."/>
            <person name="Plessy C."/>
            <person name="Shibata K."/>
            <person name="Shiraki T."/>
            <person name="Suzuki S."/>
            <person name="Tagami M."/>
            <person name="Waki K."/>
            <person name="Watahiki A."/>
            <person name="Okamura-Oho Y."/>
            <person name="Suzuki H."/>
            <person name="Kawai J."/>
            <person name="Hayashizaki Y."/>
        </authorList>
    </citation>
    <scope>NUCLEOTIDE SEQUENCE [LARGE SCALE MRNA]</scope>
    <source>
        <strain>C57BL/6J</strain>
        <tissue>Olfactory bulb</tissue>
    </source>
</reference>
<reference key="2">
    <citation type="journal article" date="2004" name="Genome Res.">
        <title>The status, quality, and expansion of the NIH full-length cDNA project: the Mammalian Gene Collection (MGC).</title>
        <authorList>
            <consortium name="The MGC Project Team"/>
        </authorList>
    </citation>
    <scope>NUCLEOTIDE SEQUENCE [LARGE SCALE MRNA]</scope>
    <source>
        <strain>FVB/N</strain>
        <tissue>Colon</tissue>
    </source>
</reference>
<comment type="function">
    <text evidence="1">Plays a role in the regulation of Wnt signaling pathway during early development.</text>
</comment>
<comment type="subcellular location">
    <subcellularLocation>
        <location evidence="1">Nucleus envelope</location>
    </subcellularLocation>
</comment>
<comment type="similarity">
    <text evidence="4">Belongs to the CUSTOS family.</text>
</comment>
<gene>
    <name evidence="1" type="primary">Custos</name>
</gene>
<keyword id="KW-0217">Developmental protein</keyword>
<keyword id="KW-0539">Nucleus</keyword>
<keyword id="KW-0597">Phosphoprotein</keyword>
<keyword id="KW-1185">Reference proteome</keyword>
<keyword id="KW-0879">Wnt signaling pathway</keyword>
<evidence type="ECO:0000250" key="1">
    <source>
        <dbReference type="UniProtKB" id="A9C3N6"/>
    </source>
</evidence>
<evidence type="ECO:0000250" key="2">
    <source>
        <dbReference type="UniProtKB" id="Q96C57"/>
    </source>
</evidence>
<evidence type="ECO:0000256" key="3">
    <source>
        <dbReference type="SAM" id="MobiDB-lite"/>
    </source>
</evidence>
<evidence type="ECO:0000305" key="4"/>
<accession>Q3UY34</accession>
<accession>Q3TX98</accession>
<accession>Q8K0K9</accession>
<accession>Q9CVB7</accession>